<comment type="function">
    <text evidence="1">MotA and MotB comprise the stator element of the flagellar motor complex. Required for rotation of the flagellar motor. Probable transmembrane proton channel (By similarity).</text>
</comment>
<comment type="subunit">
    <text evidence="1">Each stator complex is composed of 4 MotA and 2 MotB subunits. 2 A subunits and 1 B subunit are thought to form a single ion channel, so that each stator complex contains two channels (By similarity).</text>
</comment>
<comment type="subcellular location">
    <subcellularLocation>
        <location evidence="1">Cell inner membrane</location>
        <topology evidence="3">Multi-pass membrane protein</topology>
    </subcellularLocation>
</comment>
<comment type="similarity">
    <text evidence="3">Belongs to the MotA family.</text>
</comment>
<reference key="1">
    <citation type="submission" date="1995-12" db="EMBL/GenBank/DDBJ databases">
        <authorList>
            <person name="Dunn J.J."/>
            <person name="Butler-Loffredo L."/>
            <person name="Kieleczawa J."/>
            <person name="Medalle J."/>
            <person name="Luft B.J."/>
        </authorList>
    </citation>
    <scope>NUCLEOTIDE SEQUENCE [GENOMIC DNA]</scope>
    <source>
        <strain>ATCC 35210 / DSM 4680 / CIP 102532 / B31</strain>
    </source>
</reference>
<reference key="2">
    <citation type="submission" date="1996-02" db="EMBL/GenBank/DDBJ databases">
        <authorList>
            <person name="Ge Y."/>
            <person name="Charon N.W."/>
        </authorList>
    </citation>
    <scope>NUCLEOTIDE SEQUENCE [GENOMIC DNA]</scope>
    <source>
        <strain>212</strain>
    </source>
</reference>
<reference key="3">
    <citation type="journal article" date="1997" name="Nature">
        <title>Genomic sequence of a Lyme disease spirochaete, Borrelia burgdorferi.</title>
        <authorList>
            <person name="Fraser C.M."/>
            <person name="Casjens S."/>
            <person name="Huang W.M."/>
            <person name="Sutton G.G."/>
            <person name="Clayton R.A."/>
            <person name="Lathigra R."/>
            <person name="White O."/>
            <person name="Ketchum K.A."/>
            <person name="Dodson R.J."/>
            <person name="Hickey E.K."/>
            <person name="Gwinn M.L."/>
            <person name="Dougherty B.A."/>
            <person name="Tomb J.-F."/>
            <person name="Fleischmann R.D."/>
            <person name="Richardson D.L."/>
            <person name="Peterson J.D."/>
            <person name="Kerlavage A.R."/>
            <person name="Quackenbush J."/>
            <person name="Salzberg S.L."/>
            <person name="Hanson M."/>
            <person name="van Vugt R."/>
            <person name="Palmer N."/>
            <person name="Adams M.D."/>
            <person name="Gocayne J.D."/>
            <person name="Weidman J.F."/>
            <person name="Utterback T.R."/>
            <person name="Watthey L."/>
            <person name="McDonald L.A."/>
            <person name="Artiach P."/>
            <person name="Bowman C."/>
            <person name="Garland S.A."/>
            <person name="Fujii C."/>
            <person name="Cotton M.D."/>
            <person name="Horst K."/>
            <person name="Roberts K.M."/>
            <person name="Hatch B."/>
            <person name="Smith H.O."/>
            <person name="Venter J.C."/>
        </authorList>
    </citation>
    <scope>NUCLEOTIDE SEQUENCE [LARGE SCALE GENOMIC DNA]</scope>
    <source>
        <strain>ATCC 35210 / DSM 4680 / CIP 102532 / B31</strain>
    </source>
</reference>
<organism>
    <name type="scientific">Borreliella burgdorferi (strain ATCC 35210 / DSM 4680 / CIP 102532 / B31)</name>
    <name type="common">Borrelia burgdorferi</name>
    <dbReference type="NCBI Taxonomy" id="224326"/>
    <lineage>
        <taxon>Bacteria</taxon>
        <taxon>Pseudomonadati</taxon>
        <taxon>Spirochaetota</taxon>
        <taxon>Spirochaetia</taxon>
        <taxon>Spirochaetales</taxon>
        <taxon>Borreliaceae</taxon>
        <taxon>Borreliella</taxon>
    </lineage>
</organism>
<evidence type="ECO:0000250" key="1"/>
<evidence type="ECO:0000255" key="2"/>
<evidence type="ECO:0000305" key="3"/>
<accession>Q44902</accession>
<accession>Q44766</accession>
<keyword id="KW-0997">Cell inner membrane</keyword>
<keyword id="KW-1003">Cell membrane</keyword>
<keyword id="KW-0145">Chemotaxis</keyword>
<keyword id="KW-0283">Flagellar rotation</keyword>
<keyword id="KW-0375">Hydrogen ion transport</keyword>
<keyword id="KW-0406">Ion transport</keyword>
<keyword id="KW-0472">Membrane</keyword>
<keyword id="KW-1185">Reference proteome</keyword>
<keyword id="KW-0812">Transmembrane</keyword>
<keyword id="KW-1133">Transmembrane helix</keyword>
<keyword id="KW-0813">Transport</keyword>
<name>MOTA_BORBU</name>
<feature type="chain" id="PRO_0000189571" description="Motility protein A">
    <location>
        <begin position="1"/>
        <end position="260"/>
    </location>
</feature>
<feature type="transmembrane region" description="Helical" evidence="2">
    <location>
        <begin position="3"/>
        <end position="23"/>
    </location>
</feature>
<feature type="transmembrane region" description="Helical" evidence="2">
    <location>
        <begin position="27"/>
        <end position="47"/>
    </location>
</feature>
<feature type="transmembrane region" description="Helical" evidence="2">
    <location>
        <begin position="152"/>
        <end position="172"/>
    </location>
</feature>
<feature type="transmembrane region" description="Helical" evidence="2">
    <location>
        <begin position="183"/>
        <end position="203"/>
    </location>
</feature>
<feature type="topological domain" description="Cytoplasmic" evidence="2">
    <location>
        <begin position="204"/>
        <end position="260"/>
    </location>
</feature>
<feature type="sequence conflict" description="In Ref. 1; AAB58962." evidence="3" ref="1">
    <original>WA</original>
    <variation>SR</variation>
    <location>
        <begin position="149"/>
        <end position="150"/>
    </location>
</feature>
<sequence>MNLASIIGWGVGFGAILISMAFTPTGLGVFWDLSSVFITVVGSFSALMASSEVVAVKKIPTYLGFFFRRNSYAKVSIIKILVELSEKARKEGLLSLDDELEQINDPFFKSGMRLVVDGADPEVIRTMLYLELDQMQERHKVGSDLFKTWAKLAPAFGMTGTLIGLVALLGNLEDKSALGSSMAVALITTLYGTIMANLMFTPVQLKLEKIDTEEAAVKTMIIEGVLSIQSGDNPRILEQKLMTFLTPKDRSQLNSSIGGE</sequence>
<protein>
    <recommendedName>
        <fullName>Motility protein A</fullName>
    </recommendedName>
    <alternativeName>
        <fullName>Chemotaxis protein MotA</fullName>
    </alternativeName>
</protein>
<gene>
    <name type="primary">motA</name>
    <name type="ordered locus">BB_0281</name>
</gene>
<dbReference type="EMBL" id="U43739">
    <property type="protein sequence ID" value="AAA85605.1"/>
    <property type="molecule type" value="Genomic_DNA"/>
</dbReference>
<dbReference type="EMBL" id="L75945">
    <property type="protein sequence ID" value="AAB58962.1"/>
    <property type="molecule type" value="Genomic_DNA"/>
</dbReference>
<dbReference type="EMBL" id="AE000783">
    <property type="protein sequence ID" value="AAC66667.1"/>
    <property type="molecule type" value="Genomic_DNA"/>
</dbReference>
<dbReference type="PIR" id="A70135">
    <property type="entry name" value="A70135"/>
</dbReference>
<dbReference type="RefSeq" id="NP_212415.1">
    <property type="nucleotide sequence ID" value="NC_001318.1"/>
</dbReference>
<dbReference type="RefSeq" id="WP_002556880.1">
    <property type="nucleotide sequence ID" value="NC_001318.1"/>
</dbReference>
<dbReference type="SMR" id="Q44902"/>
<dbReference type="STRING" id="224326.BB_0281"/>
<dbReference type="PaxDb" id="224326-BB_0281"/>
<dbReference type="EnsemblBacteria" id="AAC66667">
    <property type="protein sequence ID" value="AAC66667"/>
    <property type="gene ID" value="BB_0281"/>
</dbReference>
<dbReference type="KEGG" id="bbu:BB_0281"/>
<dbReference type="PATRIC" id="fig|224326.49.peg.680"/>
<dbReference type="HOGENOM" id="CLU_079895_1_0_12"/>
<dbReference type="OrthoDB" id="9806929at2"/>
<dbReference type="Proteomes" id="UP000001807">
    <property type="component" value="Chromosome"/>
</dbReference>
<dbReference type="GO" id="GO:0005886">
    <property type="term" value="C:plasma membrane"/>
    <property type="evidence" value="ECO:0007669"/>
    <property type="project" value="UniProtKB-SubCell"/>
</dbReference>
<dbReference type="GO" id="GO:0071978">
    <property type="term" value="P:bacterial-type flagellum-dependent swarming motility"/>
    <property type="evidence" value="ECO:0007669"/>
    <property type="project" value="InterPro"/>
</dbReference>
<dbReference type="GO" id="GO:0006935">
    <property type="term" value="P:chemotaxis"/>
    <property type="evidence" value="ECO:0007669"/>
    <property type="project" value="UniProtKB-KW"/>
</dbReference>
<dbReference type="GO" id="GO:1902600">
    <property type="term" value="P:proton transmembrane transport"/>
    <property type="evidence" value="ECO:0007669"/>
    <property type="project" value="UniProtKB-KW"/>
</dbReference>
<dbReference type="InterPro" id="IPR000540">
    <property type="entry name" value="Flag_MotA_CS"/>
</dbReference>
<dbReference type="InterPro" id="IPR047055">
    <property type="entry name" value="MotA-like"/>
</dbReference>
<dbReference type="InterPro" id="IPR002898">
    <property type="entry name" value="MotA_ExbB_proton_chnl"/>
</dbReference>
<dbReference type="PANTHER" id="PTHR30433">
    <property type="entry name" value="CHEMOTAXIS PROTEIN MOTA"/>
    <property type="match status" value="1"/>
</dbReference>
<dbReference type="PANTHER" id="PTHR30433:SF2">
    <property type="entry name" value="MOTILITY PROTEIN A"/>
    <property type="match status" value="1"/>
</dbReference>
<dbReference type="Pfam" id="PF01618">
    <property type="entry name" value="MotA_ExbB"/>
    <property type="match status" value="1"/>
</dbReference>
<dbReference type="PROSITE" id="PS01307">
    <property type="entry name" value="MOTA"/>
    <property type="match status" value="1"/>
</dbReference>
<proteinExistence type="inferred from homology"/>